<dbReference type="EC" id="3.1.3.12"/>
<dbReference type="EMBL" id="AL033545">
    <property type="protein sequence ID" value="CAA22164.1"/>
    <property type="molecule type" value="Genomic_DNA"/>
</dbReference>
<dbReference type="EMBL" id="AL161557">
    <property type="protein sequence ID" value="CAB79214.1"/>
    <property type="molecule type" value="Genomic_DNA"/>
</dbReference>
<dbReference type="EMBL" id="CP002687">
    <property type="protein sequence ID" value="AEE84627.1"/>
    <property type="molecule type" value="Genomic_DNA"/>
</dbReference>
<dbReference type="EMBL" id="AK221933">
    <property type="protein sequence ID" value="BAD94370.1"/>
    <property type="molecule type" value="mRNA"/>
</dbReference>
<dbReference type="EMBL" id="AK316702">
    <property type="protein sequence ID" value="BAH19429.1"/>
    <property type="molecule type" value="mRNA"/>
</dbReference>
<dbReference type="PIR" id="T05453">
    <property type="entry name" value="T05453"/>
</dbReference>
<dbReference type="RefSeq" id="NP_193990.1">
    <property type="nucleotide sequence ID" value="NM_118385.4"/>
</dbReference>
<dbReference type="SMR" id="Q9SUW0"/>
<dbReference type="FunCoup" id="Q9SUW0">
    <property type="interactions" value="172"/>
</dbReference>
<dbReference type="STRING" id="3702.Q9SUW0"/>
<dbReference type="iPTMnet" id="Q9SUW0"/>
<dbReference type="PaxDb" id="3702-AT4G22590.1"/>
<dbReference type="ProteomicsDB" id="245253"/>
<dbReference type="EnsemblPlants" id="AT4G22590.1">
    <property type="protein sequence ID" value="AT4G22590.1"/>
    <property type="gene ID" value="AT4G22590"/>
</dbReference>
<dbReference type="GeneID" id="828355"/>
<dbReference type="Gramene" id="AT4G22590.1">
    <property type="protein sequence ID" value="AT4G22590.1"/>
    <property type="gene ID" value="AT4G22590"/>
</dbReference>
<dbReference type="KEGG" id="ath:AT4G22590"/>
<dbReference type="Araport" id="AT4G22590"/>
<dbReference type="TAIR" id="AT4G22590">
    <property type="gene designation" value="TPPG"/>
</dbReference>
<dbReference type="eggNOG" id="KOG1050">
    <property type="taxonomic scope" value="Eukaryota"/>
</dbReference>
<dbReference type="HOGENOM" id="CLU_037265_1_0_1"/>
<dbReference type="InParanoid" id="Q9SUW0"/>
<dbReference type="OMA" id="EDANCIK"/>
<dbReference type="OrthoDB" id="411251at2759"/>
<dbReference type="PhylomeDB" id="Q9SUW0"/>
<dbReference type="UniPathway" id="UPA00299"/>
<dbReference type="PRO" id="PR:Q9SUW0"/>
<dbReference type="Proteomes" id="UP000006548">
    <property type="component" value="Chromosome 4"/>
</dbReference>
<dbReference type="ExpressionAtlas" id="Q9SUW0">
    <property type="expression patterns" value="baseline and differential"/>
</dbReference>
<dbReference type="GO" id="GO:0004805">
    <property type="term" value="F:trehalose-phosphatase activity"/>
    <property type="evidence" value="ECO:0007669"/>
    <property type="project" value="UniProtKB-EC"/>
</dbReference>
<dbReference type="GO" id="GO:0005992">
    <property type="term" value="P:trehalose biosynthetic process"/>
    <property type="evidence" value="ECO:0007669"/>
    <property type="project" value="UniProtKB-UniPathway"/>
</dbReference>
<dbReference type="CDD" id="cd01627">
    <property type="entry name" value="HAD_TPP"/>
    <property type="match status" value="1"/>
</dbReference>
<dbReference type="FunFam" id="3.40.50.1000:FF:000073">
    <property type="entry name" value="Trehalose 6-phosphate phosphatase"/>
    <property type="match status" value="1"/>
</dbReference>
<dbReference type="Gene3D" id="3.40.50.1000">
    <property type="entry name" value="HAD superfamily/HAD-like"/>
    <property type="match status" value="2"/>
</dbReference>
<dbReference type="InterPro" id="IPR036412">
    <property type="entry name" value="HAD-like_sf"/>
</dbReference>
<dbReference type="InterPro" id="IPR006379">
    <property type="entry name" value="HAD-SF_hydro_IIB"/>
</dbReference>
<dbReference type="InterPro" id="IPR023214">
    <property type="entry name" value="HAD_sf"/>
</dbReference>
<dbReference type="InterPro" id="IPR044651">
    <property type="entry name" value="OTSB-like"/>
</dbReference>
<dbReference type="InterPro" id="IPR003337">
    <property type="entry name" value="Trehalose_PPase"/>
</dbReference>
<dbReference type="NCBIfam" id="TIGR01484">
    <property type="entry name" value="HAD-SF-IIB"/>
    <property type="match status" value="1"/>
</dbReference>
<dbReference type="NCBIfam" id="TIGR00685">
    <property type="entry name" value="T6PP"/>
    <property type="match status" value="1"/>
</dbReference>
<dbReference type="PANTHER" id="PTHR43768">
    <property type="entry name" value="TREHALOSE 6-PHOSPHATE PHOSPHATASE"/>
    <property type="match status" value="1"/>
</dbReference>
<dbReference type="PANTHER" id="PTHR43768:SF17">
    <property type="entry name" value="TREHALOSE-PHOSPHATE PHOSPHATASE F-RELATED"/>
    <property type="match status" value="1"/>
</dbReference>
<dbReference type="Pfam" id="PF02358">
    <property type="entry name" value="Trehalose_PPase"/>
    <property type="match status" value="1"/>
</dbReference>
<dbReference type="SUPFAM" id="SSF56784">
    <property type="entry name" value="HAD-like"/>
    <property type="match status" value="1"/>
</dbReference>
<sequence length="377" mass="42634">MDLNINKTTPVLSDPTTPVSKTRLGSSFPSGRFMMNSRKKIPKLDDVRSNGWLDAMISSSPPRKRLVKDFNIEIAPEDDFSQRAWMLKYPSAITSFAHIAAQAKNKKIAVFLDYDGTLSPIVDDPDRAIMSDAMRAAVKDVAKYFPTAIISGRSRDKVYQLVGLTELYYAGSHGMDIMTPVNPNGSPEDPNCIKTTDQQGEEVNLFQPAKEFIPVIEEVYNNLVEITKCIKGAKVENHKFCTSVHYRNVDEKDWPLVAQRVHDHLKRYPRLRITHGRKVLEVRPVIEWNKGKAVEFLLESLGLSNNDEFLPIFIGDDKTDEDAFKVLREGNRGFGILVSSVPKESNAFYSLRDPSEVKKFLKTLVKWGKMESSKTSF</sequence>
<evidence type="ECO:0000250" key="1"/>
<evidence type="ECO:0000256" key="2">
    <source>
        <dbReference type="SAM" id="MobiDB-lite"/>
    </source>
</evidence>
<evidence type="ECO:0000269" key="3">
    <source>
    </source>
</evidence>
<evidence type="ECO:0000305" key="4"/>
<feature type="chain" id="PRO_0000417649" description="Probable trehalose-phosphate phosphatase G">
    <location>
        <begin position="1"/>
        <end position="377"/>
    </location>
</feature>
<feature type="region of interest" description="Disordered" evidence="2">
    <location>
        <begin position="1"/>
        <end position="20"/>
    </location>
</feature>
<gene>
    <name type="primary">TPPG</name>
    <name type="synonym">TPP6</name>
    <name type="ordered locus">At4g22590</name>
    <name type="ORF">F7K2.170</name>
</gene>
<keyword id="KW-0378">Hydrolase</keyword>
<keyword id="KW-1185">Reference proteome</keyword>
<keyword id="KW-0346">Stress response</keyword>
<comment type="function">
    <text evidence="1">Removes the phosphate from trehalose 6-phosphate to produce free trehalose. Trehalose accumulation in plant may improve abiotic stress tolerance (By similarity).</text>
</comment>
<comment type="catalytic activity">
    <reaction>
        <text>alpha,alpha-trehalose 6-phosphate + H2O = alpha,alpha-trehalose + phosphate</text>
        <dbReference type="Rhea" id="RHEA:23420"/>
        <dbReference type="ChEBI" id="CHEBI:15377"/>
        <dbReference type="ChEBI" id="CHEBI:16551"/>
        <dbReference type="ChEBI" id="CHEBI:43474"/>
        <dbReference type="ChEBI" id="CHEBI:58429"/>
        <dbReference type="EC" id="3.1.3.12"/>
    </reaction>
</comment>
<comment type="cofactor">
    <cofactor evidence="1">
        <name>a divalent metal cation</name>
        <dbReference type="ChEBI" id="CHEBI:60240"/>
    </cofactor>
</comment>
<comment type="pathway">
    <text>Glycan biosynthesis; trehalose biosynthesis.</text>
</comment>
<comment type="induction">
    <text evidence="3">By trehalose.</text>
</comment>
<comment type="similarity">
    <text evidence="4">Belongs to the trehalose phosphatase family.</text>
</comment>
<reference key="1">
    <citation type="journal article" date="1999" name="Nature">
        <title>Sequence and analysis of chromosome 4 of the plant Arabidopsis thaliana.</title>
        <authorList>
            <person name="Mayer K.F.X."/>
            <person name="Schueller C."/>
            <person name="Wambutt R."/>
            <person name="Murphy G."/>
            <person name="Volckaert G."/>
            <person name="Pohl T."/>
            <person name="Duesterhoeft A."/>
            <person name="Stiekema W."/>
            <person name="Entian K.-D."/>
            <person name="Terryn N."/>
            <person name="Harris B."/>
            <person name="Ansorge W."/>
            <person name="Brandt P."/>
            <person name="Grivell L.A."/>
            <person name="Rieger M."/>
            <person name="Weichselgartner M."/>
            <person name="de Simone V."/>
            <person name="Obermaier B."/>
            <person name="Mache R."/>
            <person name="Mueller M."/>
            <person name="Kreis M."/>
            <person name="Delseny M."/>
            <person name="Puigdomenech P."/>
            <person name="Watson M."/>
            <person name="Schmidtheini T."/>
            <person name="Reichert B."/>
            <person name="Portetelle D."/>
            <person name="Perez-Alonso M."/>
            <person name="Boutry M."/>
            <person name="Bancroft I."/>
            <person name="Vos P."/>
            <person name="Hoheisel J."/>
            <person name="Zimmermann W."/>
            <person name="Wedler H."/>
            <person name="Ridley P."/>
            <person name="Langham S.-A."/>
            <person name="McCullagh B."/>
            <person name="Bilham L."/>
            <person name="Robben J."/>
            <person name="van der Schueren J."/>
            <person name="Grymonprez B."/>
            <person name="Chuang Y.-J."/>
            <person name="Vandenbussche F."/>
            <person name="Braeken M."/>
            <person name="Weltjens I."/>
            <person name="Voet M."/>
            <person name="Bastiaens I."/>
            <person name="Aert R."/>
            <person name="Defoor E."/>
            <person name="Weitzenegger T."/>
            <person name="Bothe G."/>
            <person name="Ramsperger U."/>
            <person name="Hilbert H."/>
            <person name="Braun M."/>
            <person name="Holzer E."/>
            <person name="Brandt A."/>
            <person name="Peters S."/>
            <person name="van Staveren M."/>
            <person name="Dirkse W."/>
            <person name="Mooijman P."/>
            <person name="Klein Lankhorst R."/>
            <person name="Rose M."/>
            <person name="Hauf J."/>
            <person name="Koetter P."/>
            <person name="Berneiser S."/>
            <person name="Hempel S."/>
            <person name="Feldpausch M."/>
            <person name="Lamberth S."/>
            <person name="Van den Daele H."/>
            <person name="De Keyser A."/>
            <person name="Buysshaert C."/>
            <person name="Gielen J."/>
            <person name="Villarroel R."/>
            <person name="De Clercq R."/>
            <person name="van Montagu M."/>
            <person name="Rogers J."/>
            <person name="Cronin A."/>
            <person name="Quail M.A."/>
            <person name="Bray-Allen S."/>
            <person name="Clark L."/>
            <person name="Doggett J."/>
            <person name="Hall S."/>
            <person name="Kay M."/>
            <person name="Lennard N."/>
            <person name="McLay K."/>
            <person name="Mayes R."/>
            <person name="Pettett A."/>
            <person name="Rajandream M.A."/>
            <person name="Lyne M."/>
            <person name="Benes V."/>
            <person name="Rechmann S."/>
            <person name="Borkova D."/>
            <person name="Bloecker H."/>
            <person name="Scharfe M."/>
            <person name="Grimm M."/>
            <person name="Loehnert T.-H."/>
            <person name="Dose S."/>
            <person name="de Haan M."/>
            <person name="Maarse A.C."/>
            <person name="Schaefer M."/>
            <person name="Mueller-Auer S."/>
            <person name="Gabel C."/>
            <person name="Fuchs M."/>
            <person name="Fartmann B."/>
            <person name="Granderath K."/>
            <person name="Dauner D."/>
            <person name="Herzl A."/>
            <person name="Neumann S."/>
            <person name="Argiriou A."/>
            <person name="Vitale D."/>
            <person name="Liguori R."/>
            <person name="Piravandi E."/>
            <person name="Massenet O."/>
            <person name="Quigley F."/>
            <person name="Clabauld G."/>
            <person name="Muendlein A."/>
            <person name="Felber R."/>
            <person name="Schnabl S."/>
            <person name="Hiller R."/>
            <person name="Schmidt W."/>
            <person name="Lecharny A."/>
            <person name="Aubourg S."/>
            <person name="Chefdor F."/>
            <person name="Cooke R."/>
            <person name="Berger C."/>
            <person name="Monfort A."/>
            <person name="Casacuberta E."/>
            <person name="Gibbons T."/>
            <person name="Weber N."/>
            <person name="Vandenbol M."/>
            <person name="Bargues M."/>
            <person name="Terol J."/>
            <person name="Torres A."/>
            <person name="Perez-Perez A."/>
            <person name="Purnelle B."/>
            <person name="Bent E."/>
            <person name="Johnson S."/>
            <person name="Tacon D."/>
            <person name="Jesse T."/>
            <person name="Heijnen L."/>
            <person name="Schwarz S."/>
            <person name="Scholler P."/>
            <person name="Heber S."/>
            <person name="Francs P."/>
            <person name="Bielke C."/>
            <person name="Frishman D."/>
            <person name="Haase D."/>
            <person name="Lemcke K."/>
            <person name="Mewes H.-W."/>
            <person name="Stocker S."/>
            <person name="Zaccaria P."/>
            <person name="Bevan M."/>
            <person name="Wilson R.K."/>
            <person name="de la Bastide M."/>
            <person name="Habermann K."/>
            <person name="Parnell L."/>
            <person name="Dedhia N."/>
            <person name="Gnoj L."/>
            <person name="Schutz K."/>
            <person name="Huang E."/>
            <person name="Spiegel L."/>
            <person name="Sekhon M."/>
            <person name="Murray J."/>
            <person name="Sheet P."/>
            <person name="Cordes M."/>
            <person name="Abu-Threideh J."/>
            <person name="Stoneking T."/>
            <person name="Kalicki J."/>
            <person name="Graves T."/>
            <person name="Harmon G."/>
            <person name="Edwards J."/>
            <person name="Latreille P."/>
            <person name="Courtney L."/>
            <person name="Cloud J."/>
            <person name="Abbott A."/>
            <person name="Scott K."/>
            <person name="Johnson D."/>
            <person name="Minx P."/>
            <person name="Bentley D."/>
            <person name="Fulton B."/>
            <person name="Miller N."/>
            <person name="Greco T."/>
            <person name="Kemp K."/>
            <person name="Kramer J."/>
            <person name="Fulton L."/>
            <person name="Mardis E."/>
            <person name="Dante M."/>
            <person name="Pepin K."/>
            <person name="Hillier L.W."/>
            <person name="Nelson J."/>
            <person name="Spieth J."/>
            <person name="Ryan E."/>
            <person name="Andrews S."/>
            <person name="Geisel C."/>
            <person name="Layman D."/>
            <person name="Du H."/>
            <person name="Ali J."/>
            <person name="Berghoff A."/>
            <person name="Jones K."/>
            <person name="Drone K."/>
            <person name="Cotton M."/>
            <person name="Joshu C."/>
            <person name="Antonoiu B."/>
            <person name="Zidanic M."/>
            <person name="Strong C."/>
            <person name="Sun H."/>
            <person name="Lamar B."/>
            <person name="Yordan C."/>
            <person name="Ma P."/>
            <person name="Zhong J."/>
            <person name="Preston R."/>
            <person name="Vil D."/>
            <person name="Shekher M."/>
            <person name="Matero A."/>
            <person name="Shah R."/>
            <person name="Swaby I.K."/>
            <person name="O'Shaughnessy A."/>
            <person name="Rodriguez M."/>
            <person name="Hoffman J."/>
            <person name="Till S."/>
            <person name="Granat S."/>
            <person name="Shohdy N."/>
            <person name="Hasegawa A."/>
            <person name="Hameed A."/>
            <person name="Lodhi M."/>
            <person name="Johnson A."/>
            <person name="Chen E."/>
            <person name="Marra M.A."/>
            <person name="Martienssen R."/>
            <person name="McCombie W.R."/>
        </authorList>
    </citation>
    <scope>NUCLEOTIDE SEQUENCE [LARGE SCALE GENOMIC DNA]</scope>
    <source>
        <strain>cv. Columbia</strain>
    </source>
</reference>
<reference key="2">
    <citation type="journal article" date="2017" name="Plant J.">
        <title>Araport11: a complete reannotation of the Arabidopsis thaliana reference genome.</title>
        <authorList>
            <person name="Cheng C.Y."/>
            <person name="Krishnakumar V."/>
            <person name="Chan A.P."/>
            <person name="Thibaud-Nissen F."/>
            <person name="Schobel S."/>
            <person name="Town C.D."/>
        </authorList>
    </citation>
    <scope>GENOME REANNOTATION</scope>
    <source>
        <strain>cv. Columbia</strain>
    </source>
</reference>
<reference key="3">
    <citation type="submission" date="2005-03" db="EMBL/GenBank/DDBJ databases">
        <title>Large-scale analysis of RIKEN Arabidopsis full-length (RAFL) cDNAs.</title>
        <authorList>
            <person name="Totoki Y."/>
            <person name="Seki M."/>
            <person name="Ishida J."/>
            <person name="Nakajima M."/>
            <person name="Enju A."/>
            <person name="Kamiya A."/>
            <person name="Narusaka M."/>
            <person name="Shin-i T."/>
            <person name="Nakagawa M."/>
            <person name="Sakamoto N."/>
            <person name="Oishi K."/>
            <person name="Kohara Y."/>
            <person name="Kobayashi M."/>
            <person name="Toyoda A."/>
            <person name="Sakaki Y."/>
            <person name="Sakurai T."/>
            <person name="Iida K."/>
            <person name="Akiyama K."/>
            <person name="Satou M."/>
            <person name="Toyoda T."/>
            <person name="Konagaya A."/>
            <person name="Carninci P."/>
            <person name="Kawai J."/>
            <person name="Hayashizaki Y."/>
            <person name="Shinozaki K."/>
        </authorList>
    </citation>
    <scope>NUCLEOTIDE SEQUENCE [LARGE SCALE MRNA]</scope>
    <source>
        <strain>cv. Columbia</strain>
    </source>
</reference>
<reference key="4">
    <citation type="journal article" date="2009" name="DNA Res.">
        <title>Analysis of multiple occurrences of alternative splicing events in Arabidopsis thaliana using novel sequenced full-length cDNAs.</title>
        <authorList>
            <person name="Iida K."/>
            <person name="Fukami-Kobayashi K."/>
            <person name="Toyoda A."/>
            <person name="Sakaki Y."/>
            <person name="Kobayashi M."/>
            <person name="Seki M."/>
            <person name="Shinozaki K."/>
        </authorList>
    </citation>
    <scope>NUCLEOTIDE SEQUENCE [LARGE SCALE MRNA]</scope>
    <source>
        <strain>cv. Columbia</strain>
    </source>
</reference>
<reference key="5">
    <citation type="journal article" date="2003" name="J. Exp. Bot.">
        <title>Is trehalose-6-phosphate a regulator of sugar metabolism in plants?</title>
        <authorList>
            <person name="Eastmond P.J."/>
            <person name="Li Y."/>
            <person name="Graham I.A."/>
        </authorList>
    </citation>
    <scope>GENE FAMILY</scope>
</reference>
<reference key="6">
    <citation type="journal article" date="2004" name="Plant Physiol.">
        <title>Trehalose mediated growth inhibition of Arabidopsis seedlings is due to trehalose-6-phosphate accumulation.</title>
        <authorList>
            <person name="Schluepmann H."/>
            <person name="van Dijken A.J.H."/>
            <person name="Aghdasi M."/>
            <person name="Wobbes B."/>
            <person name="Paul M."/>
            <person name="Smeekens S.C.M."/>
        </authorList>
    </citation>
    <scope>INDUCTION</scope>
    <scope>NOMENCLATURE</scope>
</reference>
<proteinExistence type="evidence at transcript level"/>
<name>TPPG_ARATH</name>
<protein>
    <recommendedName>
        <fullName>Probable trehalose-phosphate phosphatase G</fullName>
        <shortName>AtTPPG</shortName>
        <ecNumber>3.1.3.12</ecNumber>
    </recommendedName>
    <alternativeName>
        <fullName>Trehalose 6-phosphate phosphatase</fullName>
    </alternativeName>
    <alternativeName>
        <fullName>Trehalose-phosphate phosphatase 6</fullName>
    </alternativeName>
</protein>
<organism>
    <name type="scientific">Arabidopsis thaliana</name>
    <name type="common">Mouse-ear cress</name>
    <dbReference type="NCBI Taxonomy" id="3702"/>
    <lineage>
        <taxon>Eukaryota</taxon>
        <taxon>Viridiplantae</taxon>
        <taxon>Streptophyta</taxon>
        <taxon>Embryophyta</taxon>
        <taxon>Tracheophyta</taxon>
        <taxon>Spermatophyta</taxon>
        <taxon>Magnoliopsida</taxon>
        <taxon>eudicotyledons</taxon>
        <taxon>Gunneridae</taxon>
        <taxon>Pentapetalae</taxon>
        <taxon>rosids</taxon>
        <taxon>malvids</taxon>
        <taxon>Brassicales</taxon>
        <taxon>Brassicaceae</taxon>
        <taxon>Camelineae</taxon>
        <taxon>Arabidopsis</taxon>
    </lineage>
</organism>
<accession>Q9SUW0</accession>